<keyword id="KW-0975">Bacterial flagellum</keyword>
<keyword id="KW-0574">Periplasm</keyword>
<keyword id="KW-1185">Reference proteome</keyword>
<keyword id="KW-0732">Signal</keyword>
<dbReference type="EMBL" id="AE017125">
    <property type="protein sequence ID" value="AAP76739.1"/>
    <property type="molecule type" value="Genomic_DNA"/>
</dbReference>
<dbReference type="RefSeq" id="WP_011114985.1">
    <property type="nucleotide sequence ID" value="NC_004917.1"/>
</dbReference>
<dbReference type="SMR" id="Q7VJV1"/>
<dbReference type="STRING" id="235279.HH_0142"/>
<dbReference type="KEGG" id="hhe:HH_0142"/>
<dbReference type="eggNOG" id="COG1706">
    <property type="taxonomic scope" value="Bacteria"/>
</dbReference>
<dbReference type="HOGENOM" id="CLU_045235_1_0_7"/>
<dbReference type="OrthoDB" id="9786431at2"/>
<dbReference type="Proteomes" id="UP000002495">
    <property type="component" value="Chromosome"/>
</dbReference>
<dbReference type="GO" id="GO:0009428">
    <property type="term" value="C:bacterial-type flagellum basal body, distal rod, P ring"/>
    <property type="evidence" value="ECO:0007669"/>
    <property type="project" value="InterPro"/>
</dbReference>
<dbReference type="GO" id="GO:0030288">
    <property type="term" value="C:outer membrane-bounded periplasmic space"/>
    <property type="evidence" value="ECO:0007669"/>
    <property type="project" value="InterPro"/>
</dbReference>
<dbReference type="GO" id="GO:0005198">
    <property type="term" value="F:structural molecule activity"/>
    <property type="evidence" value="ECO:0007669"/>
    <property type="project" value="InterPro"/>
</dbReference>
<dbReference type="GO" id="GO:0071973">
    <property type="term" value="P:bacterial-type flagellum-dependent cell motility"/>
    <property type="evidence" value="ECO:0007669"/>
    <property type="project" value="InterPro"/>
</dbReference>
<dbReference type="HAMAP" id="MF_00416">
    <property type="entry name" value="FlgI"/>
    <property type="match status" value="1"/>
</dbReference>
<dbReference type="InterPro" id="IPR001782">
    <property type="entry name" value="Flag_FlgI"/>
</dbReference>
<dbReference type="NCBIfam" id="NF003676">
    <property type="entry name" value="PRK05303.1"/>
    <property type="match status" value="1"/>
</dbReference>
<dbReference type="PANTHER" id="PTHR30381">
    <property type="entry name" value="FLAGELLAR P-RING PERIPLASMIC PROTEIN FLGI"/>
    <property type="match status" value="1"/>
</dbReference>
<dbReference type="PANTHER" id="PTHR30381:SF0">
    <property type="entry name" value="FLAGELLAR P-RING PROTEIN"/>
    <property type="match status" value="1"/>
</dbReference>
<dbReference type="Pfam" id="PF02119">
    <property type="entry name" value="FlgI"/>
    <property type="match status" value="1"/>
</dbReference>
<dbReference type="PRINTS" id="PR01010">
    <property type="entry name" value="FLGPRINGFLGI"/>
</dbReference>
<comment type="function">
    <text evidence="1">Assembles around the rod to form the L-ring and probably protects the motor/basal body from shearing forces during rotation.</text>
</comment>
<comment type="subunit">
    <text evidence="1">The basal body constitutes a major portion of the flagellar organelle and consists of four rings (L,P,S, and M) mounted on a central rod.</text>
</comment>
<comment type="subcellular location">
    <subcellularLocation>
        <location evidence="1">Periplasm</location>
    </subcellularLocation>
    <subcellularLocation>
        <location evidence="1">Bacterial flagellum basal body</location>
    </subcellularLocation>
</comment>
<comment type="similarity">
    <text evidence="1">Belongs to the FlgI family.</text>
</comment>
<protein>
    <recommendedName>
        <fullName evidence="1">Flagellar P-ring protein</fullName>
    </recommendedName>
    <alternativeName>
        <fullName evidence="1">Basal body P-ring protein</fullName>
    </alternativeName>
</protein>
<proteinExistence type="inferred from homology"/>
<organism>
    <name type="scientific">Helicobacter hepaticus (strain ATCC 51449 / 3B1)</name>
    <dbReference type="NCBI Taxonomy" id="235279"/>
    <lineage>
        <taxon>Bacteria</taxon>
        <taxon>Pseudomonadati</taxon>
        <taxon>Campylobacterota</taxon>
        <taxon>Epsilonproteobacteria</taxon>
        <taxon>Campylobacterales</taxon>
        <taxon>Helicobacteraceae</taxon>
        <taxon>Helicobacter</taxon>
    </lineage>
</organism>
<reference key="1">
    <citation type="journal article" date="2003" name="Proc. Natl. Acad. Sci. U.S.A.">
        <title>The complete genome sequence of the carcinogenic bacterium Helicobacter hepaticus.</title>
        <authorList>
            <person name="Suerbaum S."/>
            <person name="Josenhans C."/>
            <person name="Sterzenbach T."/>
            <person name="Drescher B."/>
            <person name="Brandt P."/>
            <person name="Bell M."/>
            <person name="Droege M."/>
            <person name="Fartmann B."/>
            <person name="Fischer H.-P."/>
            <person name="Ge Z."/>
            <person name="Hoerster A."/>
            <person name="Holland R."/>
            <person name="Klein K."/>
            <person name="Koenig J."/>
            <person name="Macko L."/>
            <person name="Mendz G.L."/>
            <person name="Nyakatura G."/>
            <person name="Schauer D.B."/>
            <person name="Shen Z."/>
            <person name="Weber J."/>
            <person name="Frosch M."/>
            <person name="Fox J.G."/>
        </authorList>
    </citation>
    <scope>NUCLEOTIDE SEQUENCE [LARGE SCALE GENOMIC DNA]</scope>
    <source>
        <strain>ATCC 51449 / 3B1</strain>
    </source>
</reference>
<accession>Q7VJV1</accession>
<evidence type="ECO:0000255" key="1">
    <source>
        <dbReference type="HAMAP-Rule" id="MF_00416"/>
    </source>
</evidence>
<sequence>MRRKNNNKIWIWVATLILSISALYGQKINQIAQIVGIRDNSLVGYGLVIGLNGTGDKSGSKFTMQSIANMLESVNVKLSANDIKSKNVAAVMVTASLPPFARQGDKLDILVSSIGDAKSINGGTLVMTPLTGVDGNIYALAQGNITFGESGSTLSGTIIGGASVEREIAYNLYNQENATLSLKSSDLQNAIKIQQALNDVFRDAIAVAVDARTIKLKKPENLSMVEFLALVEEVEIDYSRKERIVIDEKSGTIVAGVGITIDPVVVTHGDITIKISDEMPDDPEAIKLEDGTMMSRAQGTISSTNGTKPTVSSVVKALQRMGATPRNVISILESMKKSGALNADIEVM</sequence>
<feature type="signal peptide" evidence="1">
    <location>
        <begin position="1"/>
        <end position="24"/>
    </location>
</feature>
<feature type="chain" id="PRO_0000009505" description="Flagellar P-ring protein">
    <location>
        <begin position="25"/>
        <end position="348"/>
    </location>
</feature>
<gene>
    <name evidence="1" type="primary">flgI</name>
    <name type="ordered locus">HH_0142</name>
</gene>
<name>FLGI_HELHP</name>